<gene>
    <name evidence="1" type="primary">argB</name>
    <name type="ordered locus">LI0333</name>
</gene>
<dbReference type="EC" id="2.7.2.8" evidence="1"/>
<dbReference type="EMBL" id="AM180252">
    <property type="protein sequence ID" value="CAJ54389.1"/>
    <property type="molecule type" value="Genomic_DNA"/>
</dbReference>
<dbReference type="RefSeq" id="WP_011526418.1">
    <property type="nucleotide sequence ID" value="NC_008011.1"/>
</dbReference>
<dbReference type="SMR" id="Q1MRI7"/>
<dbReference type="STRING" id="363253.LI0333"/>
<dbReference type="KEGG" id="lip:LI0333"/>
<dbReference type="eggNOG" id="COG0548">
    <property type="taxonomic scope" value="Bacteria"/>
</dbReference>
<dbReference type="HOGENOM" id="CLU_053680_0_0_7"/>
<dbReference type="OrthoDB" id="9803155at2"/>
<dbReference type="UniPathway" id="UPA00068">
    <property type="reaction ID" value="UER00107"/>
</dbReference>
<dbReference type="Proteomes" id="UP000002430">
    <property type="component" value="Chromosome"/>
</dbReference>
<dbReference type="GO" id="GO:0005737">
    <property type="term" value="C:cytoplasm"/>
    <property type="evidence" value="ECO:0007669"/>
    <property type="project" value="UniProtKB-SubCell"/>
</dbReference>
<dbReference type="GO" id="GO:0003991">
    <property type="term" value="F:acetylglutamate kinase activity"/>
    <property type="evidence" value="ECO:0007669"/>
    <property type="project" value="UniProtKB-UniRule"/>
</dbReference>
<dbReference type="GO" id="GO:0005524">
    <property type="term" value="F:ATP binding"/>
    <property type="evidence" value="ECO:0007669"/>
    <property type="project" value="UniProtKB-UniRule"/>
</dbReference>
<dbReference type="GO" id="GO:0042450">
    <property type="term" value="P:arginine biosynthetic process via ornithine"/>
    <property type="evidence" value="ECO:0007669"/>
    <property type="project" value="UniProtKB-UniRule"/>
</dbReference>
<dbReference type="GO" id="GO:0006526">
    <property type="term" value="P:L-arginine biosynthetic process"/>
    <property type="evidence" value="ECO:0007669"/>
    <property type="project" value="UniProtKB-UniPathway"/>
</dbReference>
<dbReference type="CDD" id="cd04250">
    <property type="entry name" value="AAK_NAGK-C"/>
    <property type="match status" value="1"/>
</dbReference>
<dbReference type="FunFam" id="3.40.1160.10:FF:000004">
    <property type="entry name" value="Acetylglutamate kinase"/>
    <property type="match status" value="1"/>
</dbReference>
<dbReference type="Gene3D" id="3.40.1160.10">
    <property type="entry name" value="Acetylglutamate kinase-like"/>
    <property type="match status" value="1"/>
</dbReference>
<dbReference type="HAMAP" id="MF_00082">
    <property type="entry name" value="ArgB"/>
    <property type="match status" value="1"/>
</dbReference>
<dbReference type="InterPro" id="IPR036393">
    <property type="entry name" value="AceGlu_kinase-like_sf"/>
</dbReference>
<dbReference type="InterPro" id="IPR004662">
    <property type="entry name" value="AcgluKinase_fam"/>
</dbReference>
<dbReference type="InterPro" id="IPR037528">
    <property type="entry name" value="ArgB"/>
</dbReference>
<dbReference type="InterPro" id="IPR001048">
    <property type="entry name" value="Asp/Glu/Uridylate_kinase"/>
</dbReference>
<dbReference type="InterPro" id="IPR001057">
    <property type="entry name" value="Glu/AcGlu_kinase"/>
</dbReference>
<dbReference type="InterPro" id="IPR041727">
    <property type="entry name" value="NAGK-C"/>
</dbReference>
<dbReference type="NCBIfam" id="TIGR00761">
    <property type="entry name" value="argB"/>
    <property type="match status" value="1"/>
</dbReference>
<dbReference type="PANTHER" id="PTHR23342">
    <property type="entry name" value="N-ACETYLGLUTAMATE SYNTHASE"/>
    <property type="match status" value="1"/>
</dbReference>
<dbReference type="PANTHER" id="PTHR23342:SF0">
    <property type="entry name" value="N-ACETYLGLUTAMATE SYNTHASE, MITOCHONDRIAL"/>
    <property type="match status" value="1"/>
</dbReference>
<dbReference type="Pfam" id="PF00696">
    <property type="entry name" value="AA_kinase"/>
    <property type="match status" value="1"/>
</dbReference>
<dbReference type="PIRSF" id="PIRSF000728">
    <property type="entry name" value="NAGK"/>
    <property type="match status" value="1"/>
</dbReference>
<dbReference type="PRINTS" id="PR00474">
    <property type="entry name" value="GLU5KINASE"/>
</dbReference>
<dbReference type="SUPFAM" id="SSF53633">
    <property type="entry name" value="Carbamate kinase-like"/>
    <property type="match status" value="1"/>
</dbReference>
<name>ARGB_LAWIP</name>
<reference key="1">
    <citation type="submission" date="2005-11" db="EMBL/GenBank/DDBJ databases">
        <title>The complete genome sequence of Lawsonia intracellularis: the causative agent of proliferative enteropathy.</title>
        <authorList>
            <person name="Kaur K."/>
            <person name="Zhang Q."/>
            <person name="Beckler D."/>
            <person name="Munir S."/>
            <person name="Li L."/>
            <person name="Kinsley K."/>
            <person name="Herron L."/>
            <person name="Peterson A."/>
            <person name="May B."/>
            <person name="Singh S."/>
            <person name="Gebhart C."/>
            <person name="Kapur V."/>
        </authorList>
    </citation>
    <scope>NUCLEOTIDE SEQUENCE [LARGE SCALE GENOMIC DNA]</scope>
    <source>
        <strain>PHE/MN1-00</strain>
    </source>
</reference>
<protein>
    <recommendedName>
        <fullName evidence="1">Acetylglutamate kinase</fullName>
        <ecNumber evidence="1">2.7.2.8</ecNumber>
    </recommendedName>
    <alternativeName>
        <fullName evidence="1">N-acetyl-L-glutamate 5-phosphotransferase</fullName>
    </alternativeName>
    <alternativeName>
        <fullName evidence="1">NAG kinase</fullName>
        <shortName evidence="1">NAGK</shortName>
    </alternativeName>
</protein>
<accession>Q1MRI7</accession>
<sequence>MDMEKARLRSHMLIESLPYLQKFQGKVIVIKYGGHAMKDTLLKQSFAQSIALLNLVGIHPIVVHGGGPQIGNMLSRLNIQSEFREGLRVTDKATMDVVEMVLAGSVNKEIVNQVNQAGAKAVGLSGKDGAFILAEKNDLILTKENQPPEIINLGNVGRVVHIETSLLYTLIEKGFIPIIAPVGTDNKQTYNINADEVAGAIAGALKATRLLLLTDVEGILDLNKKLIQSIYLEDTPKLFSDGIVFGGMIPKLQCCIEAIEQGVEKVVILDGRLEHSILLELFTDQGVGTEIVKKPV</sequence>
<organism>
    <name type="scientific">Lawsonia intracellularis (strain PHE/MN1-00)</name>
    <dbReference type="NCBI Taxonomy" id="363253"/>
    <lineage>
        <taxon>Bacteria</taxon>
        <taxon>Pseudomonadati</taxon>
        <taxon>Thermodesulfobacteriota</taxon>
        <taxon>Desulfovibrionia</taxon>
        <taxon>Desulfovibrionales</taxon>
        <taxon>Desulfovibrionaceae</taxon>
        <taxon>Lawsonia</taxon>
    </lineage>
</organism>
<feature type="chain" id="PRO_0000264716" description="Acetylglutamate kinase">
    <location>
        <begin position="1"/>
        <end position="296"/>
    </location>
</feature>
<feature type="binding site" evidence="1">
    <location>
        <begin position="66"/>
        <end position="67"/>
    </location>
    <ligand>
        <name>substrate</name>
    </ligand>
</feature>
<feature type="binding site" evidence="1">
    <location>
        <position position="88"/>
    </location>
    <ligand>
        <name>substrate</name>
    </ligand>
</feature>
<feature type="binding site" evidence="1">
    <location>
        <position position="191"/>
    </location>
    <ligand>
        <name>substrate</name>
    </ligand>
</feature>
<feature type="site" description="Transition state stabilizer" evidence="1">
    <location>
        <position position="31"/>
    </location>
</feature>
<feature type="site" description="Transition state stabilizer" evidence="1">
    <location>
        <position position="251"/>
    </location>
</feature>
<evidence type="ECO:0000255" key="1">
    <source>
        <dbReference type="HAMAP-Rule" id="MF_00082"/>
    </source>
</evidence>
<proteinExistence type="inferred from homology"/>
<keyword id="KW-0028">Amino-acid biosynthesis</keyword>
<keyword id="KW-0055">Arginine biosynthesis</keyword>
<keyword id="KW-0067">ATP-binding</keyword>
<keyword id="KW-0963">Cytoplasm</keyword>
<keyword id="KW-0418">Kinase</keyword>
<keyword id="KW-0547">Nucleotide-binding</keyword>
<keyword id="KW-1185">Reference proteome</keyword>
<keyword id="KW-0808">Transferase</keyword>
<comment type="function">
    <text evidence="1">Catalyzes the ATP-dependent phosphorylation of N-acetyl-L-glutamate.</text>
</comment>
<comment type="catalytic activity">
    <reaction evidence="1">
        <text>N-acetyl-L-glutamate + ATP = N-acetyl-L-glutamyl 5-phosphate + ADP</text>
        <dbReference type="Rhea" id="RHEA:14629"/>
        <dbReference type="ChEBI" id="CHEBI:30616"/>
        <dbReference type="ChEBI" id="CHEBI:44337"/>
        <dbReference type="ChEBI" id="CHEBI:57936"/>
        <dbReference type="ChEBI" id="CHEBI:456216"/>
        <dbReference type="EC" id="2.7.2.8"/>
    </reaction>
</comment>
<comment type="pathway">
    <text evidence="1">Amino-acid biosynthesis; L-arginine biosynthesis; N(2)-acetyl-L-ornithine from L-glutamate: step 2/4.</text>
</comment>
<comment type="subcellular location">
    <subcellularLocation>
        <location evidence="1">Cytoplasm</location>
    </subcellularLocation>
</comment>
<comment type="similarity">
    <text evidence="1">Belongs to the acetylglutamate kinase family. ArgB subfamily.</text>
</comment>